<protein>
    <recommendedName>
        <fullName evidence="1">Thiazole synthase</fullName>
        <ecNumber evidence="1">2.8.1.10</ecNumber>
    </recommendedName>
</protein>
<feature type="chain" id="PRO_1000206141" description="Thiazole synthase">
    <location>
        <begin position="1"/>
        <end position="273"/>
    </location>
</feature>
<feature type="region of interest" description="Disordered" evidence="2">
    <location>
        <begin position="251"/>
        <end position="273"/>
    </location>
</feature>
<feature type="active site" description="Schiff-base intermediate with DXP" evidence="1">
    <location>
        <position position="110"/>
    </location>
</feature>
<feature type="binding site" evidence="1">
    <location>
        <position position="171"/>
    </location>
    <ligand>
        <name>1-deoxy-D-xylulose 5-phosphate</name>
        <dbReference type="ChEBI" id="CHEBI:57792"/>
    </ligand>
</feature>
<feature type="binding site" evidence="1">
    <location>
        <begin position="197"/>
        <end position="198"/>
    </location>
    <ligand>
        <name>1-deoxy-D-xylulose 5-phosphate</name>
        <dbReference type="ChEBI" id="CHEBI:57792"/>
    </ligand>
</feature>
<feature type="binding site" evidence="1">
    <location>
        <begin position="219"/>
        <end position="220"/>
    </location>
    <ligand>
        <name>1-deoxy-D-xylulose 5-phosphate</name>
        <dbReference type="ChEBI" id="CHEBI:57792"/>
    </ligand>
</feature>
<proteinExistence type="inferred from homology"/>
<reference key="1">
    <citation type="journal article" date="2011" name="J. Bacteriol.">
        <title>Complete genome sequence of the metabolically versatile plant growth-promoting endophyte, Variovorax paradoxus S110.</title>
        <authorList>
            <person name="Han J.I."/>
            <person name="Choi H.K."/>
            <person name="Lee S.W."/>
            <person name="Orwin P.M."/>
            <person name="Kim J."/>
            <person name="Laroe S.L."/>
            <person name="Kim T.G."/>
            <person name="O'Neil J."/>
            <person name="Leadbetter J.R."/>
            <person name="Lee S.Y."/>
            <person name="Hur C.G."/>
            <person name="Spain J.C."/>
            <person name="Ovchinnikova G."/>
            <person name="Goodwin L."/>
            <person name="Han C."/>
        </authorList>
    </citation>
    <scope>NUCLEOTIDE SEQUENCE [LARGE SCALE GENOMIC DNA]</scope>
    <source>
        <strain>S110</strain>
    </source>
</reference>
<organism>
    <name type="scientific">Variovorax paradoxus (strain S110)</name>
    <dbReference type="NCBI Taxonomy" id="543728"/>
    <lineage>
        <taxon>Bacteria</taxon>
        <taxon>Pseudomonadati</taxon>
        <taxon>Pseudomonadota</taxon>
        <taxon>Betaproteobacteria</taxon>
        <taxon>Burkholderiales</taxon>
        <taxon>Comamonadaceae</taxon>
        <taxon>Variovorax</taxon>
    </lineage>
</organism>
<evidence type="ECO:0000255" key="1">
    <source>
        <dbReference type="HAMAP-Rule" id="MF_00443"/>
    </source>
</evidence>
<evidence type="ECO:0000256" key="2">
    <source>
        <dbReference type="SAM" id="MobiDB-lite"/>
    </source>
</evidence>
<dbReference type="EC" id="2.8.1.10" evidence="1"/>
<dbReference type="EMBL" id="CP001635">
    <property type="protein sequence ID" value="ACS19023.1"/>
    <property type="molecule type" value="Genomic_DNA"/>
</dbReference>
<dbReference type="SMR" id="C5CJH0"/>
<dbReference type="STRING" id="543728.Vapar_2396"/>
<dbReference type="KEGG" id="vap:Vapar_2396"/>
<dbReference type="eggNOG" id="COG2022">
    <property type="taxonomic scope" value="Bacteria"/>
</dbReference>
<dbReference type="HOGENOM" id="CLU_062233_1_0_4"/>
<dbReference type="OrthoDB" id="9805935at2"/>
<dbReference type="UniPathway" id="UPA00060"/>
<dbReference type="GO" id="GO:0005737">
    <property type="term" value="C:cytoplasm"/>
    <property type="evidence" value="ECO:0007669"/>
    <property type="project" value="UniProtKB-SubCell"/>
</dbReference>
<dbReference type="GO" id="GO:1990107">
    <property type="term" value="F:thiazole synthase activity"/>
    <property type="evidence" value="ECO:0007669"/>
    <property type="project" value="UniProtKB-EC"/>
</dbReference>
<dbReference type="GO" id="GO:0009229">
    <property type="term" value="P:thiamine diphosphate biosynthetic process"/>
    <property type="evidence" value="ECO:0007669"/>
    <property type="project" value="UniProtKB-UniRule"/>
</dbReference>
<dbReference type="CDD" id="cd04728">
    <property type="entry name" value="ThiG"/>
    <property type="match status" value="1"/>
</dbReference>
<dbReference type="Gene3D" id="3.20.20.70">
    <property type="entry name" value="Aldolase class I"/>
    <property type="match status" value="1"/>
</dbReference>
<dbReference type="HAMAP" id="MF_00443">
    <property type="entry name" value="ThiG"/>
    <property type="match status" value="1"/>
</dbReference>
<dbReference type="InterPro" id="IPR013785">
    <property type="entry name" value="Aldolase_TIM"/>
</dbReference>
<dbReference type="InterPro" id="IPR033983">
    <property type="entry name" value="Thiazole_synthase_ThiG"/>
</dbReference>
<dbReference type="InterPro" id="IPR008867">
    <property type="entry name" value="ThiG"/>
</dbReference>
<dbReference type="PANTHER" id="PTHR34266">
    <property type="entry name" value="THIAZOLE SYNTHASE"/>
    <property type="match status" value="1"/>
</dbReference>
<dbReference type="PANTHER" id="PTHR34266:SF2">
    <property type="entry name" value="THIAZOLE SYNTHASE"/>
    <property type="match status" value="1"/>
</dbReference>
<dbReference type="Pfam" id="PF05690">
    <property type="entry name" value="ThiG"/>
    <property type="match status" value="1"/>
</dbReference>
<dbReference type="SUPFAM" id="SSF110399">
    <property type="entry name" value="ThiG-like"/>
    <property type="match status" value="1"/>
</dbReference>
<gene>
    <name evidence="1" type="primary">thiG</name>
    <name type="ordered locus">Vapar_2396</name>
</gene>
<comment type="function">
    <text evidence="1">Catalyzes the rearrangement of 1-deoxy-D-xylulose 5-phosphate (DXP) to produce the thiazole phosphate moiety of thiamine. Sulfur is provided by the thiocarboxylate moiety of the carrier protein ThiS. In vitro, sulfur can be provided by H(2)S.</text>
</comment>
<comment type="catalytic activity">
    <reaction evidence="1">
        <text>[ThiS sulfur-carrier protein]-C-terminal-Gly-aminoethanethioate + 2-iminoacetate + 1-deoxy-D-xylulose 5-phosphate = [ThiS sulfur-carrier protein]-C-terminal Gly-Gly + 2-[(2R,5Z)-2-carboxy-4-methylthiazol-5(2H)-ylidene]ethyl phosphate + 2 H2O + H(+)</text>
        <dbReference type="Rhea" id="RHEA:26297"/>
        <dbReference type="Rhea" id="RHEA-COMP:12909"/>
        <dbReference type="Rhea" id="RHEA-COMP:19908"/>
        <dbReference type="ChEBI" id="CHEBI:15377"/>
        <dbReference type="ChEBI" id="CHEBI:15378"/>
        <dbReference type="ChEBI" id="CHEBI:57792"/>
        <dbReference type="ChEBI" id="CHEBI:62899"/>
        <dbReference type="ChEBI" id="CHEBI:77846"/>
        <dbReference type="ChEBI" id="CHEBI:90778"/>
        <dbReference type="ChEBI" id="CHEBI:232372"/>
        <dbReference type="EC" id="2.8.1.10"/>
    </reaction>
</comment>
<comment type="pathway">
    <text evidence="1">Cofactor biosynthesis; thiamine diphosphate biosynthesis.</text>
</comment>
<comment type="subunit">
    <text evidence="1">Homotetramer. Forms heterodimers with either ThiH or ThiS.</text>
</comment>
<comment type="subcellular location">
    <subcellularLocation>
        <location evidence="1">Cytoplasm</location>
    </subcellularLocation>
</comment>
<comment type="similarity">
    <text evidence="1">Belongs to the ThiG family.</text>
</comment>
<accession>C5CJH0</accession>
<sequence>MTTASAIPDNDPLVLYGQTFHSRLLLGTARYPSPDLLEAAVKRAKPAMLTASLRRQSASPGASDSGNGFWELLRRLAVPVLPNTAGCHSVQEVIATAQMARELFDTPWIKLELIGDDYTLQPDTLNLVDAASQLIRDGFQVLPYCTEDLVLCQRLVDVGCQAVMPWAAPIGTGRGPVNPYALQLLRERLSVPMLVDAGLGLPSHACQVMEWGYDGVLLNTAVALAQDPVSMAGAFADAVQAGRAAHRAGAMAAQDSAQPSTPVLGTPFWHHAP</sequence>
<keyword id="KW-0963">Cytoplasm</keyword>
<keyword id="KW-0704">Schiff base</keyword>
<keyword id="KW-0784">Thiamine biosynthesis</keyword>
<keyword id="KW-0808">Transferase</keyword>
<name>THIG_VARPS</name>